<proteinExistence type="evidence at protein level"/>
<accession>Q8IAX8</accession>
<sequence length="248" mass="27259">MKKDREPIDEDEMRITSTGRMTNYVNYGAKILGDEDKKSIKIKATGNAIGKAVTLAEIIKRRFKGLHQITRCGSTVITDQYVSGQDNSEHVVQEKTVSFIEILLSREQLDMKDAGYQPPLDEKYVKEMTPEEIVNSRPFRRGGFRPRFYRGFRGGRGGFLRRGGYRGFGDRVYEPRSSFRGGRGSGYGGNFGRGGYRSGGGMGGGFRGGFRGGFRGGRDGGYRGGNRGGSRSGFRGGRGGFRGGRALS</sequence>
<evidence type="ECO:0000256" key="1">
    <source>
        <dbReference type="SAM" id="MobiDB-lite"/>
    </source>
</evidence>
<evidence type="ECO:0000269" key="2">
    <source>
    </source>
</evidence>
<evidence type="ECO:0000269" key="3">
    <source>
    </source>
</evidence>
<evidence type="ECO:0000303" key="4">
    <source>
    </source>
</evidence>
<evidence type="ECO:0000303" key="5">
    <source>
    </source>
</evidence>
<evidence type="ECO:0000305" key="6"/>
<evidence type="ECO:0000312" key="7">
    <source>
        <dbReference type="EMBL" id="CAD51232.1"/>
    </source>
</evidence>
<evidence type="ECO:0000312" key="8">
    <source>
        <dbReference type="Proteomes" id="UP000001450"/>
    </source>
</evidence>
<protein>
    <recommendedName>
        <fullName evidence="6">DNA/RNA-binding protein ALBA1</fullName>
        <shortName evidence="4 5">PfAlba1</shortName>
    </recommendedName>
</protein>
<reference evidence="8" key="1">
    <citation type="journal article" date="2002" name="Nature">
        <title>Genome sequence of the human malaria parasite Plasmodium falciparum.</title>
        <authorList>
            <person name="Gardner M.J."/>
            <person name="Hall N."/>
            <person name="Fung E."/>
            <person name="White O."/>
            <person name="Berriman M."/>
            <person name="Hyman R.W."/>
            <person name="Carlton J.M."/>
            <person name="Pain A."/>
            <person name="Nelson K.E."/>
            <person name="Bowman S."/>
            <person name="Paulsen I.T."/>
            <person name="James K.D."/>
            <person name="Eisen J.A."/>
            <person name="Rutherford K.M."/>
            <person name="Salzberg S.L."/>
            <person name="Craig A."/>
            <person name="Kyes S."/>
            <person name="Chan M.-S."/>
            <person name="Nene V."/>
            <person name="Shallom S.J."/>
            <person name="Suh B."/>
            <person name="Peterson J."/>
            <person name="Angiuoli S."/>
            <person name="Pertea M."/>
            <person name="Allen J."/>
            <person name="Selengut J."/>
            <person name="Haft D."/>
            <person name="Mather M.W."/>
            <person name="Vaidya A.B."/>
            <person name="Martin D.M.A."/>
            <person name="Fairlamb A.H."/>
            <person name="Fraunholz M.J."/>
            <person name="Roos D.S."/>
            <person name="Ralph S.A."/>
            <person name="McFadden G.I."/>
            <person name="Cummings L.M."/>
            <person name="Subramanian G.M."/>
            <person name="Mungall C."/>
            <person name="Venter J.C."/>
            <person name="Carucci D.J."/>
            <person name="Hoffman S.L."/>
            <person name="Newbold C."/>
            <person name="Davis R.W."/>
            <person name="Fraser C.M."/>
            <person name="Barrell B.G."/>
        </authorList>
    </citation>
    <scope>NUCLEOTIDE SEQUENCE [LARGE SCALE GENOMIC DNA]</scope>
    <source>
        <strain evidence="8">3D7</strain>
    </source>
</reference>
<reference evidence="8" key="2">
    <citation type="journal article" date="2002" name="Nature">
        <title>Sequence of Plasmodium falciparum chromosomes 1, 3-9 and 13.</title>
        <authorList>
            <person name="Hall N."/>
            <person name="Pain A."/>
            <person name="Berriman M."/>
            <person name="Churcher C.M."/>
            <person name="Harris B."/>
            <person name="Harris D."/>
            <person name="Mungall K.L."/>
            <person name="Bowman S."/>
            <person name="Atkin R."/>
            <person name="Baker S."/>
            <person name="Barron A."/>
            <person name="Brooks K."/>
            <person name="Buckee C.O."/>
            <person name="Burrows C."/>
            <person name="Cherevach I."/>
            <person name="Chillingworth C."/>
            <person name="Chillingworth T."/>
            <person name="Christodoulou Z."/>
            <person name="Clark L."/>
            <person name="Clark R."/>
            <person name="Corton C."/>
            <person name="Cronin A."/>
            <person name="Davies R.M."/>
            <person name="Davis P."/>
            <person name="Dear P."/>
            <person name="Dearden F."/>
            <person name="Doggett J."/>
            <person name="Feltwell T."/>
            <person name="Goble A."/>
            <person name="Goodhead I."/>
            <person name="Gwilliam R."/>
            <person name="Hamlin N."/>
            <person name="Hance Z."/>
            <person name="Harper D."/>
            <person name="Hauser H."/>
            <person name="Hornsby T."/>
            <person name="Holroyd S."/>
            <person name="Horrocks P."/>
            <person name="Humphray S."/>
            <person name="Jagels K."/>
            <person name="James K.D."/>
            <person name="Johnson D."/>
            <person name="Kerhornou A."/>
            <person name="Knights A."/>
            <person name="Konfortov B."/>
            <person name="Kyes S."/>
            <person name="Larke N."/>
            <person name="Lawson D."/>
            <person name="Lennard N."/>
            <person name="Line A."/>
            <person name="Maddison M."/>
            <person name="Mclean J."/>
            <person name="Mooney P."/>
            <person name="Moule S."/>
            <person name="Murphy L."/>
            <person name="Oliver K."/>
            <person name="Ormond D."/>
            <person name="Price C."/>
            <person name="Quail M.A."/>
            <person name="Rabbinowitsch E."/>
            <person name="Rajandream M.A."/>
            <person name="Rutter S."/>
            <person name="Rutherford K.M."/>
            <person name="Sanders M."/>
            <person name="Simmonds M."/>
            <person name="Seeger K."/>
            <person name="Sharp S."/>
            <person name="Smith R."/>
            <person name="Squares R."/>
            <person name="Squares S."/>
            <person name="Stevens K."/>
            <person name="Taylor K."/>
            <person name="Tivey A."/>
            <person name="Unwin L."/>
            <person name="Whitehead S."/>
            <person name="Woodward J.R."/>
            <person name="Sulston J.E."/>
            <person name="Craig A."/>
            <person name="Newbold C."/>
            <person name="Barrell B.G."/>
        </authorList>
    </citation>
    <scope>NUCLEOTIDE SEQUENCE [LARGE SCALE GENOMIC DNA]</scope>
    <source>
        <strain evidence="8">3D7</strain>
    </source>
</reference>
<reference evidence="6" key="3">
    <citation type="journal article" date="2012" name="Nucleic Acids Res.">
        <title>PfAlbas constitute a new eukaryotic DNA/RNA-binding protein family in malaria parasites.</title>
        <authorList>
            <person name="Chene A."/>
            <person name="Vembar S.S."/>
            <person name="Riviere L."/>
            <person name="Lopez-Rubio J.J."/>
            <person name="Claes A."/>
            <person name="Siegel T.N."/>
            <person name="Sakamoto H."/>
            <person name="Scheidig-Benatar C."/>
            <person name="Hernandez-Rivas R."/>
            <person name="Scherf A."/>
        </authorList>
    </citation>
    <scope>IDENTIFICATION BY MASS SPECTROMETRY</scope>
    <scope>FUNCTION</scope>
    <scope>SUBUNIT</scope>
    <scope>IDENTIFICATION IN THE TARE6-ASSOCIATED COMPLEX</scope>
    <scope>SUBCELLULAR LOCATION</scope>
    <scope>DEVELOPMENTAL STAGE</scope>
</reference>
<reference evidence="6" key="4">
    <citation type="journal article" date="2015" name="Genome Biol.">
        <title>The PfAlba1 RNA-binding protein is an important regulator of translational timing in Plasmodium falciparum blood stages.</title>
        <authorList>
            <person name="Vembar S.S."/>
            <person name="Macpherson C.R."/>
            <person name="Sismeiro O."/>
            <person name="Coppee J.Y."/>
            <person name="Scherf A."/>
        </authorList>
    </citation>
    <scope>FUNCTION</scope>
    <scope>SUBUNIT</scope>
    <scope>SUBCELLULAR LOCATION</scope>
    <scope>DEVELOPMENTAL STAGE</scope>
    <scope>DISRUPTION PHENOTYPE</scope>
</reference>
<organism evidence="8">
    <name type="scientific">Plasmodium falciparum (isolate 3D7)</name>
    <dbReference type="NCBI Taxonomy" id="36329"/>
    <lineage>
        <taxon>Eukaryota</taxon>
        <taxon>Sar</taxon>
        <taxon>Alveolata</taxon>
        <taxon>Apicomplexa</taxon>
        <taxon>Aconoidasida</taxon>
        <taxon>Haemosporida</taxon>
        <taxon>Plasmodiidae</taxon>
        <taxon>Plasmodium</taxon>
        <taxon>Plasmodium (Laverania)</taxon>
    </lineage>
</organism>
<comment type="function">
    <text evidence="2 3">Possesses DNA- and RNA-binding activities (PubMed:22167473). During the asexual blood stages binds to a sub-population of mature mRNAs and regulates the timing of their translation (PubMed:26415947). Binds to DNA with relaxed sequence specificity (PubMed:22167473). Associates with the subtelomeric TARE6 repeats (PubMed:22167473).</text>
</comment>
<comment type="subunit">
    <text evidence="2 3">May form homodimers (PubMed:26415947). Identified in a TARE6-associated complex consisting of over 30 proteins and including ALBA1, ALBA2 and ALBA4; the complex binds to the non-coding subtelomeric repeat region TARE6 (PubMed:22167473).</text>
</comment>
<comment type="subcellular location">
    <subcellularLocation>
        <location evidence="2">Nucleus</location>
    </subcellularLocation>
    <subcellularLocation>
        <location evidence="2">Chromosome</location>
        <location evidence="2">Telomere</location>
    </subcellularLocation>
    <subcellularLocation>
        <location evidence="2 3">Cytoplasm</location>
    </subcellularLocation>
    <text evidence="2 3">Localizes to the nucleus in the ring stages and expands to punctate loci in the cytoplasm during the trophozoite and schizont stages.</text>
</comment>
<comment type="developmental stage">
    <text evidence="2 3">Expressed throughout asexual blood stage development (at protein level).</text>
</comment>
<comment type="disruption phenotype">
    <text evidence="3">Attempts to knock out the gene were unsuccessful, indicating that disruption is deleterious to parasite intra-erythrocytic growth.</text>
</comment>
<comment type="similarity">
    <text evidence="6">Belongs to the histone-like Alba family.</text>
</comment>
<feature type="chain" id="PRO_0000459506" description="DNA/RNA-binding protein ALBA1">
    <location>
        <begin position="1"/>
        <end position="248"/>
    </location>
</feature>
<feature type="region of interest" description="Disordered" evidence="1">
    <location>
        <begin position="217"/>
        <end position="248"/>
    </location>
</feature>
<feature type="compositionally biased region" description="Gly residues" evidence="1">
    <location>
        <begin position="222"/>
        <end position="248"/>
    </location>
</feature>
<gene>
    <name evidence="6" type="primary">ALBA1</name>
    <name evidence="7" type="ORF">PF3D7_0814200</name>
</gene>
<dbReference type="EMBL" id="AL844507">
    <property type="protein sequence ID" value="CAD51232.1"/>
    <property type="molecule type" value="Genomic_DNA"/>
</dbReference>
<dbReference type="RefSeq" id="XP_001349383.1">
    <property type="nucleotide sequence ID" value="XM_001349347.1"/>
</dbReference>
<dbReference type="SMR" id="Q8IAX8"/>
<dbReference type="STRING" id="36329.Q8IAX8"/>
<dbReference type="PaxDb" id="5833-PF08_0074"/>
<dbReference type="EnsemblProtists" id="CAD51232">
    <property type="protein sequence ID" value="CAD51232"/>
    <property type="gene ID" value="PF3D7_0814200"/>
</dbReference>
<dbReference type="GeneID" id="2655273"/>
<dbReference type="KEGG" id="pfa:PF3D7_0814200"/>
<dbReference type="VEuPathDB" id="PlasmoDB:PF3D7_0814200"/>
<dbReference type="HOGENOM" id="CLU_056830_1_1_1"/>
<dbReference type="InParanoid" id="Q8IAX8"/>
<dbReference type="OMA" id="HQVTRIC"/>
<dbReference type="OrthoDB" id="424402at2759"/>
<dbReference type="PhylomeDB" id="Q8IAX8"/>
<dbReference type="Proteomes" id="UP000001450">
    <property type="component" value="Chromosome 8"/>
</dbReference>
<dbReference type="GO" id="GO:0000781">
    <property type="term" value="C:chromosome, telomeric region"/>
    <property type="evidence" value="ECO:0007669"/>
    <property type="project" value="UniProtKB-SubCell"/>
</dbReference>
<dbReference type="GO" id="GO:0005737">
    <property type="term" value="C:cytoplasm"/>
    <property type="evidence" value="ECO:0000314"/>
    <property type="project" value="GeneDB"/>
</dbReference>
<dbReference type="GO" id="GO:0005634">
    <property type="term" value="C:nucleus"/>
    <property type="evidence" value="ECO:0000314"/>
    <property type="project" value="GeneDB"/>
</dbReference>
<dbReference type="GO" id="GO:0003677">
    <property type="term" value="F:DNA binding"/>
    <property type="evidence" value="ECO:0000314"/>
    <property type="project" value="GeneDB"/>
</dbReference>
<dbReference type="GO" id="GO:0003723">
    <property type="term" value="F:RNA binding"/>
    <property type="evidence" value="ECO:0000314"/>
    <property type="project" value="GeneDB"/>
</dbReference>
<dbReference type="GO" id="GO:0006417">
    <property type="term" value="P:regulation of translation"/>
    <property type="evidence" value="ECO:0007669"/>
    <property type="project" value="UniProtKB-KW"/>
</dbReference>
<dbReference type="FunFam" id="3.30.110.20:FF:000003">
    <property type="entry name" value="DNA/RNA-binding protein Alba 1"/>
    <property type="match status" value="1"/>
</dbReference>
<dbReference type="Gene3D" id="3.30.110.20">
    <property type="entry name" value="Alba-like domain"/>
    <property type="match status" value="1"/>
</dbReference>
<dbReference type="InterPro" id="IPR036882">
    <property type="entry name" value="Alba-like_dom_sf"/>
</dbReference>
<dbReference type="InterPro" id="IPR051958">
    <property type="entry name" value="Alba-like_NAB"/>
</dbReference>
<dbReference type="InterPro" id="IPR002775">
    <property type="entry name" value="DNA/RNA-bd_Alba-like"/>
</dbReference>
<dbReference type="PANTHER" id="PTHR13516:SF4">
    <property type="entry name" value="FI09323P"/>
    <property type="match status" value="1"/>
</dbReference>
<dbReference type="PANTHER" id="PTHR13516">
    <property type="entry name" value="RIBONUCLEASE P SUBUNIT P25"/>
    <property type="match status" value="1"/>
</dbReference>
<dbReference type="Pfam" id="PF01918">
    <property type="entry name" value="Alba"/>
    <property type="match status" value="1"/>
</dbReference>
<dbReference type="SUPFAM" id="SSF82704">
    <property type="entry name" value="AlbA-like"/>
    <property type="match status" value="1"/>
</dbReference>
<keyword id="KW-0158">Chromosome</keyword>
<keyword id="KW-0963">Cytoplasm</keyword>
<keyword id="KW-0238">DNA-binding</keyword>
<keyword id="KW-0539">Nucleus</keyword>
<keyword id="KW-1185">Reference proteome</keyword>
<keyword id="KW-0694">RNA-binding</keyword>
<keyword id="KW-0779">Telomere</keyword>
<keyword id="KW-0810">Translation regulation</keyword>
<name>ALBA1_PLAF7</name>